<comment type="catalytic activity">
    <reaction evidence="1">
        <text>L-arginine + H(+) = agmatine + CO2</text>
        <dbReference type="Rhea" id="RHEA:17641"/>
        <dbReference type="ChEBI" id="CHEBI:15378"/>
        <dbReference type="ChEBI" id="CHEBI:16526"/>
        <dbReference type="ChEBI" id="CHEBI:32682"/>
        <dbReference type="ChEBI" id="CHEBI:58145"/>
        <dbReference type="EC" id="4.1.1.19"/>
    </reaction>
</comment>
<comment type="cofactor">
    <cofactor evidence="1">
        <name>pyruvate</name>
        <dbReference type="ChEBI" id="CHEBI:15361"/>
    </cofactor>
    <text evidence="1">Binds 1 pyruvoyl group covalently per subunit.</text>
</comment>
<comment type="similarity">
    <text evidence="1">Belongs to the PdaD family.</text>
</comment>
<evidence type="ECO:0000255" key="1">
    <source>
        <dbReference type="HAMAP-Rule" id="MF_01404"/>
    </source>
</evidence>
<proteinExistence type="inferred from homology"/>
<sequence length="181" mass="19981">MSFVPTKVFFTKGVGRHKEYLSSFELALRDAKIEKCNLVTVSSIFPPKCERISVEEGLKHLKPGQITFAVMARNSTNENNRLISASVGVALPADETQYGYLSEHHPYGETAEHSGEYAEDLAATMLATTLGIEFDPNKDWDEREGIYKMSGKIVNSFNITESAEGETGLWTTVISCAVLLP</sequence>
<accession>B3QM53</accession>
<keyword id="KW-0210">Decarboxylase</keyword>
<keyword id="KW-0456">Lyase</keyword>
<keyword id="KW-0670">Pyruvate</keyword>
<feature type="chain" id="PRO_1000145462" description="Pyruvoyl-dependent arginine decarboxylase subunit beta" evidence="1">
    <location>
        <begin position="1"/>
        <end position="42"/>
    </location>
</feature>
<feature type="chain" id="PRO_1000145463" description="Pyruvoyl-dependent arginine decarboxylase subunit alpha" evidence="1">
    <location>
        <begin position="43"/>
        <end position="181"/>
    </location>
</feature>
<feature type="site" description="Cleavage (non-hydrolytic)" evidence="1">
    <location>
        <begin position="42"/>
        <end position="43"/>
    </location>
</feature>
<feature type="modified residue" description="Pyruvic acid (Ser)" evidence="1">
    <location>
        <position position="43"/>
    </location>
</feature>
<reference key="1">
    <citation type="submission" date="2008-06" db="EMBL/GenBank/DDBJ databases">
        <title>Complete sequence of Chlorobaculum parvum NCIB 8327.</title>
        <authorList>
            <consortium name="US DOE Joint Genome Institute"/>
            <person name="Lucas S."/>
            <person name="Copeland A."/>
            <person name="Lapidus A."/>
            <person name="Glavina del Rio T."/>
            <person name="Dalin E."/>
            <person name="Tice H."/>
            <person name="Bruce D."/>
            <person name="Goodwin L."/>
            <person name="Pitluck S."/>
            <person name="Schmutz J."/>
            <person name="Larimer F."/>
            <person name="Land M."/>
            <person name="Hauser L."/>
            <person name="Kyrpides N."/>
            <person name="Mikhailova N."/>
            <person name="Zhao F."/>
            <person name="Li T."/>
            <person name="Liu Z."/>
            <person name="Overmann J."/>
            <person name="Bryant D.A."/>
            <person name="Richardson P."/>
        </authorList>
    </citation>
    <scope>NUCLEOTIDE SEQUENCE [LARGE SCALE GENOMIC DNA]</scope>
    <source>
        <strain>DSM 263 / NCIMB 8327</strain>
    </source>
</reference>
<gene>
    <name evidence="1" type="primary">pdaD</name>
    <name type="ordered locus">Cpar_0586</name>
</gene>
<name>PDAD_CHLP8</name>
<organism>
    <name type="scientific">Chlorobaculum parvum (strain DSM 263 / NCIMB 8327)</name>
    <name type="common">Chlorobium vibrioforme subsp. thiosulfatophilum</name>
    <dbReference type="NCBI Taxonomy" id="517417"/>
    <lineage>
        <taxon>Bacteria</taxon>
        <taxon>Pseudomonadati</taxon>
        <taxon>Chlorobiota</taxon>
        <taxon>Chlorobiia</taxon>
        <taxon>Chlorobiales</taxon>
        <taxon>Chlorobiaceae</taxon>
        <taxon>Chlorobaculum</taxon>
    </lineage>
</organism>
<protein>
    <recommendedName>
        <fullName evidence="1">Probable pyruvoyl-dependent arginine decarboxylase</fullName>
        <shortName evidence="1">PvlArgDC</shortName>
        <ecNumber evidence="1">4.1.1.19</ecNumber>
    </recommendedName>
    <component>
        <recommendedName>
            <fullName evidence="1">Pyruvoyl-dependent arginine decarboxylase subunit beta</fullName>
        </recommendedName>
    </component>
    <component>
        <recommendedName>
            <fullName evidence="1">Pyruvoyl-dependent arginine decarboxylase subunit alpha</fullName>
        </recommendedName>
    </component>
</protein>
<dbReference type="EC" id="4.1.1.19" evidence="1"/>
<dbReference type="EMBL" id="CP001099">
    <property type="protein sequence ID" value="ACF11006.1"/>
    <property type="molecule type" value="Genomic_DNA"/>
</dbReference>
<dbReference type="RefSeq" id="WP_012501839.1">
    <property type="nucleotide sequence ID" value="NC_011027.1"/>
</dbReference>
<dbReference type="SMR" id="B3QM53"/>
<dbReference type="STRING" id="517417.Cpar_0586"/>
<dbReference type="KEGG" id="cpc:Cpar_0586"/>
<dbReference type="eggNOG" id="COG1945">
    <property type="taxonomic scope" value="Bacteria"/>
</dbReference>
<dbReference type="HOGENOM" id="CLU_114389_0_0_10"/>
<dbReference type="OrthoDB" id="9783061at2"/>
<dbReference type="Proteomes" id="UP000008811">
    <property type="component" value="Chromosome"/>
</dbReference>
<dbReference type="GO" id="GO:0008792">
    <property type="term" value="F:arginine decarboxylase activity"/>
    <property type="evidence" value="ECO:0007669"/>
    <property type="project" value="UniProtKB-UniRule"/>
</dbReference>
<dbReference type="GO" id="GO:0006527">
    <property type="term" value="P:arginine catabolic process"/>
    <property type="evidence" value="ECO:0007669"/>
    <property type="project" value="InterPro"/>
</dbReference>
<dbReference type="Gene3D" id="3.50.20.10">
    <property type="entry name" value="Pyruvoyl-Dependent Histidine Decarboxylase, subunit B"/>
    <property type="match status" value="1"/>
</dbReference>
<dbReference type="HAMAP" id="MF_01404">
    <property type="entry name" value="PvlArgDC"/>
    <property type="match status" value="1"/>
</dbReference>
<dbReference type="InterPro" id="IPR016104">
    <property type="entry name" value="Pyr-dep_his/arg-deCO2ase"/>
</dbReference>
<dbReference type="InterPro" id="IPR016105">
    <property type="entry name" value="Pyr-dep_his/arg-deCO2ase_sand"/>
</dbReference>
<dbReference type="InterPro" id="IPR002724">
    <property type="entry name" value="Pyruvoyl-dep_arg_deCO2ase"/>
</dbReference>
<dbReference type="NCBIfam" id="TIGR00286">
    <property type="entry name" value="pyruvoyl-dependent arginine decarboxylase"/>
    <property type="match status" value="1"/>
</dbReference>
<dbReference type="PANTHER" id="PTHR40438">
    <property type="entry name" value="PYRUVOYL-DEPENDENT ARGININE DECARBOXYLASE"/>
    <property type="match status" value="1"/>
</dbReference>
<dbReference type="PANTHER" id="PTHR40438:SF1">
    <property type="entry name" value="PYRUVOYL-DEPENDENT ARGININE DECARBOXYLASE"/>
    <property type="match status" value="1"/>
</dbReference>
<dbReference type="Pfam" id="PF01862">
    <property type="entry name" value="PvlArgDC"/>
    <property type="match status" value="1"/>
</dbReference>
<dbReference type="PIRSF" id="PIRSF005216">
    <property type="entry name" value="Pyruvoyl-dep_arg_deCO2ase"/>
    <property type="match status" value="1"/>
</dbReference>
<dbReference type="SFLD" id="SFLDG01170">
    <property type="entry name" value="Pyruvoyl-dependent_arginine_de"/>
    <property type="match status" value="1"/>
</dbReference>
<dbReference type="SFLD" id="SFLDS00055">
    <property type="entry name" value="Pyruvoyl-Dependent_Histidine/A"/>
    <property type="match status" value="1"/>
</dbReference>
<dbReference type="SUPFAM" id="SSF56271">
    <property type="entry name" value="Pyruvoyl-dependent histidine and arginine decarboxylases"/>
    <property type="match status" value="1"/>
</dbReference>